<dbReference type="EMBL" id="AC005851">
    <property type="protein sequence ID" value="AAC98460.1"/>
    <property type="molecule type" value="Genomic_DNA"/>
</dbReference>
<dbReference type="EMBL" id="AC006929">
    <property type="protein sequence ID" value="AAM15325.1"/>
    <property type="molecule type" value="Genomic_DNA"/>
</dbReference>
<dbReference type="EMBL" id="CP002685">
    <property type="protein sequence ID" value="AEC08074.1"/>
    <property type="molecule type" value="Genomic_DNA"/>
</dbReference>
<dbReference type="EMBL" id="CP002685">
    <property type="protein sequence ID" value="ANM61369.1"/>
    <property type="molecule type" value="Genomic_DNA"/>
</dbReference>
<dbReference type="EMBL" id="CP002685">
    <property type="protein sequence ID" value="ANM61370.1"/>
    <property type="molecule type" value="Genomic_DNA"/>
</dbReference>
<dbReference type="EMBL" id="CP002685">
    <property type="protein sequence ID" value="ANM61371.1"/>
    <property type="molecule type" value="Genomic_DNA"/>
</dbReference>
<dbReference type="EMBL" id="AF491295">
    <property type="protein sequence ID" value="AAN03809.1"/>
    <property type="molecule type" value="mRNA"/>
</dbReference>
<dbReference type="EMBL" id="BT009702">
    <property type="protein sequence ID" value="AAP88336.1"/>
    <property type="molecule type" value="mRNA"/>
</dbReference>
<dbReference type="EMBL" id="AK228157">
    <property type="protein sequence ID" value="BAF00113.1"/>
    <property type="molecule type" value="mRNA"/>
</dbReference>
<dbReference type="EMBL" id="AY085681">
    <property type="protein sequence ID" value="AAM62900.1"/>
    <property type="molecule type" value="mRNA"/>
</dbReference>
<dbReference type="PIR" id="C84680">
    <property type="entry name" value="C84680"/>
</dbReference>
<dbReference type="RefSeq" id="NP_001323590.1">
    <property type="nucleotide sequence ID" value="NM_001336142.1"/>
</dbReference>
<dbReference type="RefSeq" id="NP_001323591.1">
    <property type="nucleotide sequence ID" value="NM_001336141.1"/>
</dbReference>
<dbReference type="RefSeq" id="NP_001323592.1">
    <property type="nucleotide sequence ID" value="NM_001336140.1"/>
</dbReference>
<dbReference type="RefSeq" id="NP_565664.1">
    <property type="nucleotide sequence ID" value="NM_128365.4"/>
</dbReference>
<dbReference type="SMR" id="Q9ZUU8"/>
<dbReference type="BioGRID" id="2700">
    <property type="interactions" value="30"/>
</dbReference>
<dbReference type="FunCoup" id="Q9ZUU8">
    <property type="interactions" value="1090"/>
</dbReference>
<dbReference type="IntAct" id="Q9ZUU8">
    <property type="interactions" value="72"/>
</dbReference>
<dbReference type="STRING" id="3702.Q9ZUU8"/>
<dbReference type="PaxDb" id="3702-AT2G28060.1"/>
<dbReference type="ProteomicsDB" id="238199"/>
<dbReference type="EnsemblPlants" id="AT2G28060.1">
    <property type="protein sequence ID" value="AT2G28060.1"/>
    <property type="gene ID" value="AT2G28060"/>
</dbReference>
<dbReference type="EnsemblPlants" id="AT2G28060.2">
    <property type="protein sequence ID" value="AT2G28060.2"/>
    <property type="gene ID" value="AT2G28060"/>
</dbReference>
<dbReference type="EnsemblPlants" id="AT2G28060.3">
    <property type="protein sequence ID" value="AT2G28060.3"/>
    <property type="gene ID" value="AT2G28060"/>
</dbReference>
<dbReference type="EnsemblPlants" id="AT2G28060.4">
    <property type="protein sequence ID" value="AT2G28060.4"/>
    <property type="gene ID" value="AT2G28060"/>
</dbReference>
<dbReference type="GeneID" id="817350"/>
<dbReference type="Gramene" id="AT2G28060.1">
    <property type="protein sequence ID" value="AT2G28060.1"/>
    <property type="gene ID" value="AT2G28060"/>
</dbReference>
<dbReference type="Gramene" id="AT2G28060.2">
    <property type="protein sequence ID" value="AT2G28060.2"/>
    <property type="gene ID" value="AT2G28060"/>
</dbReference>
<dbReference type="Gramene" id="AT2G28060.3">
    <property type="protein sequence ID" value="AT2G28060.3"/>
    <property type="gene ID" value="AT2G28060"/>
</dbReference>
<dbReference type="Gramene" id="AT2G28060.4">
    <property type="protein sequence ID" value="AT2G28060.4"/>
    <property type="gene ID" value="AT2G28060"/>
</dbReference>
<dbReference type="KEGG" id="ath:AT2G28060"/>
<dbReference type="Araport" id="AT2G28060"/>
<dbReference type="TAIR" id="AT2G28060">
    <property type="gene designation" value="KINBETA3"/>
</dbReference>
<dbReference type="eggNOG" id="KOG1616">
    <property type="taxonomic scope" value="Eukaryota"/>
</dbReference>
<dbReference type="HOGENOM" id="CLU_070949_3_1_1"/>
<dbReference type="InParanoid" id="Q9ZUU8"/>
<dbReference type="OMA" id="NNVYPGH"/>
<dbReference type="OrthoDB" id="531008at2759"/>
<dbReference type="PhylomeDB" id="Q9ZUU8"/>
<dbReference type="PRO" id="PR:Q9ZUU8"/>
<dbReference type="Proteomes" id="UP000006548">
    <property type="component" value="Chromosome 2"/>
</dbReference>
<dbReference type="ExpressionAtlas" id="Q9ZUU8">
    <property type="expression patterns" value="baseline and differential"/>
</dbReference>
<dbReference type="GO" id="GO:0009507">
    <property type="term" value="C:chloroplast"/>
    <property type="evidence" value="ECO:0000314"/>
    <property type="project" value="TAIR"/>
</dbReference>
<dbReference type="GO" id="GO:0009569">
    <property type="term" value="C:chloroplast starch grain"/>
    <property type="evidence" value="ECO:0000314"/>
    <property type="project" value="TAIR"/>
</dbReference>
<dbReference type="GO" id="GO:0005737">
    <property type="term" value="C:cytoplasm"/>
    <property type="evidence" value="ECO:0000314"/>
    <property type="project" value="TAIR"/>
</dbReference>
<dbReference type="GO" id="GO:0031588">
    <property type="term" value="C:nucleotide-activated protein kinase complex"/>
    <property type="evidence" value="ECO:0000314"/>
    <property type="project" value="TAIR"/>
</dbReference>
<dbReference type="GO" id="GO:1901982">
    <property type="term" value="F:maltose binding"/>
    <property type="evidence" value="ECO:0000314"/>
    <property type="project" value="TAIR"/>
</dbReference>
<dbReference type="GO" id="GO:0019887">
    <property type="term" value="F:protein kinase regulator activity"/>
    <property type="evidence" value="ECO:0000314"/>
    <property type="project" value="TAIR"/>
</dbReference>
<dbReference type="Gene3D" id="6.20.250.60">
    <property type="match status" value="1"/>
</dbReference>
<dbReference type="InterPro" id="IPR006828">
    <property type="entry name" value="ASC_dom"/>
</dbReference>
<dbReference type="InterPro" id="IPR037256">
    <property type="entry name" value="ASC_dom_sf"/>
</dbReference>
<dbReference type="InterPro" id="IPR043554">
    <property type="entry name" value="KINB"/>
</dbReference>
<dbReference type="PANTHER" id="PTHR46316">
    <property type="entry name" value="SNF1-RELATED PROTEIN KINASE REGULATORY SUBUNIT BETA-1"/>
    <property type="match status" value="1"/>
</dbReference>
<dbReference type="PANTHER" id="PTHR46316:SF5">
    <property type="entry name" value="SNF1-RELATED PROTEIN KINASE REGULATORY SUBUNIT BETA-3"/>
    <property type="match status" value="1"/>
</dbReference>
<dbReference type="Pfam" id="PF04739">
    <property type="entry name" value="AMPKBI"/>
    <property type="match status" value="1"/>
</dbReference>
<dbReference type="SMART" id="SM01010">
    <property type="entry name" value="AMPKBI"/>
    <property type="match status" value="1"/>
</dbReference>
<dbReference type="SUPFAM" id="SSF160219">
    <property type="entry name" value="AMPKBI-like"/>
    <property type="match status" value="1"/>
</dbReference>
<organism>
    <name type="scientific">Arabidopsis thaliana</name>
    <name type="common">Mouse-ear cress</name>
    <dbReference type="NCBI Taxonomy" id="3702"/>
    <lineage>
        <taxon>Eukaryota</taxon>
        <taxon>Viridiplantae</taxon>
        <taxon>Streptophyta</taxon>
        <taxon>Embryophyta</taxon>
        <taxon>Tracheophyta</taxon>
        <taxon>Spermatophyta</taxon>
        <taxon>Magnoliopsida</taxon>
        <taxon>eudicotyledons</taxon>
        <taxon>Gunneridae</taxon>
        <taxon>Pentapetalae</taxon>
        <taxon>rosids</taxon>
        <taxon>malvids</taxon>
        <taxon>Brassicales</taxon>
        <taxon>Brassicaceae</taxon>
        <taxon>Camelineae</taxon>
        <taxon>Arabidopsis</taxon>
    </lineage>
</organism>
<reference key="1">
    <citation type="journal article" date="2004" name="Plant Mol. Biol.">
        <title>AKINbeta3, a plant specific SnRK1 protein, is lacking domains present in yeast and mammals non-catalytic beta-subunits.</title>
        <authorList>
            <person name="Gissot L."/>
            <person name="Polge C."/>
            <person name="Bouly J.P."/>
            <person name="Lemaitre T."/>
            <person name="Kreis M."/>
            <person name="Thomas M."/>
        </authorList>
    </citation>
    <scope>NUCLEOTIDE SEQUENCE [MRNA]</scope>
    <scope>TISSUE SPECIFICITY</scope>
    <scope>INTERACTION WITH KIN10; KIN11 AND SNF4</scope>
</reference>
<reference key="2">
    <citation type="journal article" date="1999" name="Nature">
        <title>Sequence and analysis of chromosome 2 of the plant Arabidopsis thaliana.</title>
        <authorList>
            <person name="Lin X."/>
            <person name="Kaul S."/>
            <person name="Rounsley S.D."/>
            <person name="Shea T.P."/>
            <person name="Benito M.-I."/>
            <person name="Town C.D."/>
            <person name="Fujii C.Y."/>
            <person name="Mason T.M."/>
            <person name="Bowman C.L."/>
            <person name="Barnstead M.E."/>
            <person name="Feldblyum T.V."/>
            <person name="Buell C.R."/>
            <person name="Ketchum K.A."/>
            <person name="Lee J.J."/>
            <person name="Ronning C.M."/>
            <person name="Koo H.L."/>
            <person name="Moffat K.S."/>
            <person name="Cronin L.A."/>
            <person name="Shen M."/>
            <person name="Pai G."/>
            <person name="Van Aken S."/>
            <person name="Umayam L."/>
            <person name="Tallon L.J."/>
            <person name="Gill J.E."/>
            <person name="Adams M.D."/>
            <person name="Carrera A.J."/>
            <person name="Creasy T.H."/>
            <person name="Goodman H.M."/>
            <person name="Somerville C.R."/>
            <person name="Copenhaver G.P."/>
            <person name="Preuss D."/>
            <person name="Nierman W.C."/>
            <person name="White O."/>
            <person name="Eisen J.A."/>
            <person name="Salzberg S.L."/>
            <person name="Fraser C.M."/>
            <person name="Venter J.C."/>
        </authorList>
    </citation>
    <scope>NUCLEOTIDE SEQUENCE [LARGE SCALE GENOMIC DNA]</scope>
    <source>
        <strain>cv. Columbia</strain>
    </source>
</reference>
<reference key="3">
    <citation type="journal article" date="2017" name="Plant J.">
        <title>Araport11: a complete reannotation of the Arabidopsis thaliana reference genome.</title>
        <authorList>
            <person name="Cheng C.Y."/>
            <person name="Krishnakumar V."/>
            <person name="Chan A.P."/>
            <person name="Thibaud-Nissen F."/>
            <person name="Schobel S."/>
            <person name="Town C.D."/>
        </authorList>
    </citation>
    <scope>GENOME REANNOTATION</scope>
    <source>
        <strain>cv. Columbia</strain>
    </source>
</reference>
<reference key="4">
    <citation type="journal article" date="2003" name="Science">
        <title>Empirical analysis of transcriptional activity in the Arabidopsis genome.</title>
        <authorList>
            <person name="Yamada K."/>
            <person name="Lim J."/>
            <person name="Dale J.M."/>
            <person name="Chen H."/>
            <person name="Shinn P."/>
            <person name="Palm C.J."/>
            <person name="Southwick A.M."/>
            <person name="Wu H.C."/>
            <person name="Kim C.J."/>
            <person name="Nguyen M."/>
            <person name="Pham P.K."/>
            <person name="Cheuk R.F."/>
            <person name="Karlin-Newmann G."/>
            <person name="Liu S.X."/>
            <person name="Lam B."/>
            <person name="Sakano H."/>
            <person name="Wu T."/>
            <person name="Yu G."/>
            <person name="Miranda M."/>
            <person name="Quach H.L."/>
            <person name="Tripp M."/>
            <person name="Chang C.H."/>
            <person name="Lee J.M."/>
            <person name="Toriumi M.J."/>
            <person name="Chan M.M."/>
            <person name="Tang C.C."/>
            <person name="Onodera C.S."/>
            <person name="Deng J.M."/>
            <person name="Akiyama K."/>
            <person name="Ansari Y."/>
            <person name="Arakawa T."/>
            <person name="Banh J."/>
            <person name="Banno F."/>
            <person name="Bowser L."/>
            <person name="Brooks S.Y."/>
            <person name="Carninci P."/>
            <person name="Chao Q."/>
            <person name="Choy N."/>
            <person name="Enju A."/>
            <person name="Goldsmith A.D."/>
            <person name="Gurjal M."/>
            <person name="Hansen N.F."/>
            <person name="Hayashizaki Y."/>
            <person name="Johnson-Hopson C."/>
            <person name="Hsuan V.W."/>
            <person name="Iida K."/>
            <person name="Karnes M."/>
            <person name="Khan S."/>
            <person name="Koesema E."/>
            <person name="Ishida J."/>
            <person name="Jiang P.X."/>
            <person name="Jones T."/>
            <person name="Kawai J."/>
            <person name="Kamiya A."/>
            <person name="Meyers C."/>
            <person name="Nakajima M."/>
            <person name="Narusaka M."/>
            <person name="Seki M."/>
            <person name="Sakurai T."/>
            <person name="Satou M."/>
            <person name="Tamse R."/>
            <person name="Vaysberg M."/>
            <person name="Wallender E.K."/>
            <person name="Wong C."/>
            <person name="Yamamura Y."/>
            <person name="Yuan S."/>
            <person name="Shinozaki K."/>
            <person name="Davis R.W."/>
            <person name="Theologis A."/>
            <person name="Ecker J.R."/>
        </authorList>
    </citation>
    <scope>NUCLEOTIDE SEQUENCE [LARGE SCALE MRNA]</scope>
    <source>
        <strain>cv. Columbia</strain>
    </source>
</reference>
<reference key="5">
    <citation type="submission" date="2006-07" db="EMBL/GenBank/DDBJ databases">
        <title>Large-scale analysis of RIKEN Arabidopsis full-length (RAFL) cDNAs.</title>
        <authorList>
            <person name="Totoki Y."/>
            <person name="Seki M."/>
            <person name="Ishida J."/>
            <person name="Nakajima M."/>
            <person name="Enju A."/>
            <person name="Kamiya A."/>
            <person name="Narusaka M."/>
            <person name="Shin-i T."/>
            <person name="Nakagawa M."/>
            <person name="Sakamoto N."/>
            <person name="Oishi K."/>
            <person name="Kohara Y."/>
            <person name="Kobayashi M."/>
            <person name="Toyoda A."/>
            <person name="Sakaki Y."/>
            <person name="Sakurai T."/>
            <person name="Iida K."/>
            <person name="Akiyama K."/>
            <person name="Satou M."/>
            <person name="Toyoda T."/>
            <person name="Konagaya A."/>
            <person name="Carninci P."/>
            <person name="Kawai J."/>
            <person name="Hayashizaki Y."/>
            <person name="Shinozaki K."/>
        </authorList>
    </citation>
    <scope>NUCLEOTIDE SEQUENCE [LARGE SCALE MRNA]</scope>
    <source>
        <strain>cv. Columbia</strain>
    </source>
</reference>
<reference key="6">
    <citation type="submission" date="2002-03" db="EMBL/GenBank/DDBJ databases">
        <title>Full-length cDNA from Arabidopsis thaliana.</title>
        <authorList>
            <person name="Brover V.V."/>
            <person name="Troukhan M.E."/>
            <person name="Alexandrov N.A."/>
            <person name="Lu Y.-P."/>
            <person name="Flavell R.B."/>
            <person name="Feldmann K.A."/>
        </authorList>
    </citation>
    <scope>NUCLEOTIDE SEQUENCE [LARGE SCALE MRNA]</scope>
</reference>
<reference key="7">
    <citation type="journal article" date="2006" name="Plant Physiol.">
        <title>AKINbetagamma contributes to SnRK1 heterotrimeric complexes and interacts with two proteins implicated in plant pathogen resistance through its KIS/GBD sequence.</title>
        <authorList>
            <person name="Gissot L."/>
            <person name="Polge C."/>
            <person name="Jossier M."/>
            <person name="Girin T."/>
            <person name="Bouly J.-P."/>
            <person name="Kreis M."/>
            <person name="Thomas M."/>
        </authorList>
    </citation>
    <scope>INTERACTION WITH SNF4</scope>
    <scope>COMPONENT OF A HETEROTRIMERIC COMPLEX</scope>
    <scope>SUBUNIT</scope>
</reference>
<reference key="8">
    <citation type="journal article" date="2007" name="Trends Plant Sci.">
        <title>SNF1/AMPK/SnRK1 kinases, global regulators at the heart of energy control?</title>
        <authorList>
            <person name="Polge C."/>
            <person name="Thomas M."/>
        </authorList>
    </citation>
    <scope>REVIEW</scope>
</reference>
<reference key="9">
    <citation type="journal article" date="2015" name="Plant J.">
        <title>SnRK1 from Arabidopsis thaliana is an atypical AMPK.</title>
        <authorList>
            <person name="Emanuelle S."/>
            <person name="Hossain M.I."/>
            <person name="Moller I.E."/>
            <person name="Pedersen H.L."/>
            <person name="van de Meene A.M."/>
            <person name="Doblin M.S."/>
            <person name="Koay A."/>
            <person name="Oakhill J.S."/>
            <person name="Scott J.W."/>
            <person name="Willats W.G."/>
            <person name="Kemp B.E."/>
            <person name="Bacic A."/>
            <person name="Gooley P.R."/>
            <person name="Stapleton D.I."/>
        </authorList>
    </citation>
    <scope>COMPONENT OF A HETEROTRIMERIC COMPLEX</scope>
    <scope>SUBUNIT</scope>
</reference>
<reference key="10">
    <citation type="journal article" date="2016" name="EXS">
        <title>Plant SnRK1 kinases: structure, regulation, and function.</title>
        <authorList>
            <person name="Margalha L."/>
            <person name="Valerio C."/>
            <person name="Baena-Gonzalez E."/>
        </authorList>
    </citation>
    <scope>REVIEW</scope>
</reference>
<reference key="11">
    <citation type="journal article" date="2018" name="J. Biol. Chem.">
        <title>The FCS-like zinc finger scaffold of the kinase SnRK1 is formed by the coordinated actions of the FLZ domain and intrinsically disordered regions.</title>
        <authorList>
            <person name="Jamsheer K M."/>
            <person name="Shukla B.N."/>
            <person name="Jindal S."/>
            <person name="Gopan N."/>
            <person name="Mannully C.T."/>
            <person name="Laxmi A."/>
        </authorList>
    </citation>
    <scope>INTERACTION WITH FLZ PROTEINS</scope>
</reference>
<keyword id="KW-0119">Carbohydrate metabolism</keyword>
<keyword id="KW-1185">Reference proteome</keyword>
<gene>
    <name type="primary">KINB3</name>
    <name type="ordered locus">At2g28060</name>
    <name type="ORF">F24D13.15</name>
    <name type="ORF">T1E2</name>
</gene>
<feature type="chain" id="PRO_0000412192" description="SNF1-related protein kinase regulatory subunit beta-3">
    <location>
        <begin position="1"/>
        <end position="114"/>
    </location>
</feature>
<feature type="region of interest" description="Disordered" evidence="2">
    <location>
        <begin position="26"/>
        <end position="50"/>
    </location>
</feature>
<feature type="region of interest" description="Association with SNF1 complex (ASC)" evidence="1">
    <location>
        <begin position="40"/>
        <end position="114"/>
    </location>
</feature>
<sequence length="114" mass="12705">MNSQNPDDHEDTTVVGFEVPVSPVSSYNNVYSSTEDETRDPPAVPPHLQHSLLGNQGSMELAYAPQNVVLNHLYIENRDAPRSVVALGFSHRFRTKFVTVVIYKPVQRRGSANV</sequence>
<name>KINB3_ARATH</name>
<protein>
    <recommendedName>
        <fullName>SNF1-related protein kinase regulatory subunit beta-3</fullName>
        <shortName>AKIN subunit beta-3</shortName>
        <shortName>AKINB3</shortName>
        <shortName>AKINbeta3</shortName>
    </recommendedName>
</protein>
<proteinExistence type="evidence at protein level"/>
<comment type="function">
    <text>Regulatory subunit of the probable trimeric SNF1-related protein kinase (SnRK) complex, which may play a role in a signal transduction cascade regulating gene expression and carbohydrate metabolism in higher plants.</text>
</comment>
<comment type="subunit">
    <text evidence="3 4 5 6">Subunit of a probable heterotrimeric complex consisting of an alpha catalytic (KIN10 or KIN11) subunit, and a beta (KINB) and a gamma (KING or SNF4) non-catalytic regulatory subunits (PubMed:17028154, PubMed:25736509). Interacts with KIN10, KIN11 and SNF4. Interacts with FLZ1, FLZ2, FLZ3, FLZ4, FLZ5, FLZ7, FLZ8, FLZ10, FLZ13, FLZ14, FLZ15 and FLZ16 (PubMed:29945970).</text>
</comment>
<comment type="interaction">
    <interactant intactId="EBI-2360704">
        <id>Q9ZUU8</id>
    </interactant>
    <interactant intactId="EBI-2360649">
        <id>Q944A6</id>
        <label>SNF4</label>
    </interactant>
    <organismsDiffer>false</organismsDiffer>
    <experiments>15</experiments>
</comment>
<comment type="tissue specificity">
    <text evidence="3">Expressed in rosette (at the protein level). Expressed in the whole plant and at the different developmental stage with a higher level in stems.</text>
</comment>
<comment type="domain">
    <text>Kinase-interacting sequence (KIS) is specific for the alpha catalytic subunit interaction and Association with SNF1 Complex (ASC) is specific for the gamma non-catalytic regulatory subunit interaction.</text>
</comment>
<comment type="similarity">
    <text evidence="7">Belongs to the 5'-AMP-activated protein kinase beta subunit family.</text>
</comment>
<comment type="caution">
    <text evidence="7">Presents a truncated kinase-interacting sequence (KIS).</text>
</comment>
<evidence type="ECO:0000250" key="1"/>
<evidence type="ECO:0000256" key="2">
    <source>
        <dbReference type="SAM" id="MobiDB-lite"/>
    </source>
</evidence>
<evidence type="ECO:0000269" key="3">
    <source>
    </source>
</evidence>
<evidence type="ECO:0000269" key="4">
    <source>
    </source>
</evidence>
<evidence type="ECO:0000269" key="5">
    <source>
    </source>
</evidence>
<evidence type="ECO:0000269" key="6">
    <source>
    </source>
</evidence>
<evidence type="ECO:0000305" key="7"/>
<accession>Q9ZUU8</accession>